<feature type="chain" id="PRO_0000386319" description="GTPase Obg">
    <location>
        <begin position="1"/>
        <end position="437"/>
    </location>
</feature>
<feature type="domain" description="Obg" evidence="3">
    <location>
        <begin position="2"/>
        <end position="160"/>
    </location>
</feature>
<feature type="domain" description="OBG-type G" evidence="1">
    <location>
        <begin position="161"/>
        <end position="338"/>
    </location>
</feature>
<feature type="domain" description="OCT" evidence="2">
    <location>
        <begin position="359"/>
        <end position="437"/>
    </location>
</feature>
<feature type="region of interest" description="Disordered" evidence="4">
    <location>
        <begin position="127"/>
        <end position="146"/>
    </location>
</feature>
<feature type="binding site" evidence="1">
    <location>
        <begin position="167"/>
        <end position="174"/>
    </location>
    <ligand>
        <name>GTP</name>
        <dbReference type="ChEBI" id="CHEBI:37565"/>
    </ligand>
</feature>
<feature type="binding site" evidence="1">
    <location>
        <position position="174"/>
    </location>
    <ligand>
        <name>Mg(2+)</name>
        <dbReference type="ChEBI" id="CHEBI:18420"/>
    </ligand>
</feature>
<feature type="binding site" evidence="1">
    <location>
        <begin position="192"/>
        <end position="196"/>
    </location>
    <ligand>
        <name>GTP</name>
        <dbReference type="ChEBI" id="CHEBI:37565"/>
    </ligand>
</feature>
<feature type="binding site" evidence="1">
    <location>
        <position position="194"/>
    </location>
    <ligand>
        <name>Mg(2+)</name>
        <dbReference type="ChEBI" id="CHEBI:18420"/>
    </ligand>
</feature>
<feature type="binding site" evidence="1">
    <location>
        <begin position="214"/>
        <end position="217"/>
    </location>
    <ligand>
        <name>GTP</name>
        <dbReference type="ChEBI" id="CHEBI:37565"/>
    </ligand>
</feature>
<feature type="binding site" evidence="1">
    <location>
        <begin position="284"/>
        <end position="287"/>
    </location>
    <ligand>
        <name>GTP</name>
        <dbReference type="ChEBI" id="CHEBI:37565"/>
    </ligand>
</feature>
<feature type="binding site" evidence="1">
    <location>
        <begin position="319"/>
        <end position="321"/>
    </location>
    <ligand>
        <name>GTP</name>
        <dbReference type="ChEBI" id="CHEBI:37565"/>
    </ligand>
</feature>
<sequence>MSMFLDTAKISVQAGRGGDGMVAFRREKYVPNGGPWGGDGGKGGSVIFKVDEGLRTLMDFRYNRKFKAKNGEKGMTKGMHGRGAEDLIVSIPPGTTVRDAETGKVITDMVEDGQEFVVAHGGRGGRGNIRFATPRNPAPEIAENGEPGEERELQLELKILADVGLVGFPSVGKSTILSVVTAAKPKIGAYHFTTIVPNLGMVRTKSGESFAMADLPGLIEGASQGVGLGTQFLRHIERTRVILHVIDMSASEGRDPYEDYLQINKELETYNLRLMERPQIIVANKMDMPEAEENLKEFKEKLAANYDEFDELPQIFPISSLAHQGLENLLEATAELLDQTDEFLLYNEDDMEQEEVYYGFNEEERPFEISRDDDASWVLSGEKLEKLFVMTNMERDESIMKFARQLRGMGVDEALRERGAKDGDIVRIGNFEFEFVD</sequence>
<proteinExistence type="inferred from homology"/>
<comment type="function">
    <text evidence="1">An essential GTPase which binds GTP, GDP and possibly (p)ppGpp with moderate affinity, with high nucleotide exchange rates and a fairly low GTP hydrolysis rate. Plays a role in control of the cell cycle, stress response, ribosome biogenesis and in those bacteria that undergo differentiation, in morphogenesis control.</text>
</comment>
<comment type="cofactor">
    <cofactor evidence="1">
        <name>Mg(2+)</name>
        <dbReference type="ChEBI" id="CHEBI:18420"/>
    </cofactor>
</comment>
<comment type="subunit">
    <text evidence="1">Monomer.</text>
</comment>
<comment type="subcellular location">
    <subcellularLocation>
        <location evidence="1">Cytoplasm</location>
    </subcellularLocation>
</comment>
<comment type="similarity">
    <text evidence="1">Belongs to the TRAFAC class OBG-HflX-like GTPase superfamily. OBG GTPase family.</text>
</comment>
<protein>
    <recommendedName>
        <fullName evidence="1">GTPase Obg</fullName>
        <ecNumber evidence="1">3.6.5.-</ecNumber>
    </recommendedName>
    <alternativeName>
        <fullName evidence="1">GTP-binding protein Obg</fullName>
    </alternativeName>
</protein>
<gene>
    <name evidence="1" type="primary">obg</name>
    <name type="ordered locus">STER_1464</name>
</gene>
<evidence type="ECO:0000255" key="1">
    <source>
        <dbReference type="HAMAP-Rule" id="MF_01454"/>
    </source>
</evidence>
<evidence type="ECO:0000255" key="2">
    <source>
        <dbReference type="PROSITE-ProRule" id="PRU01229"/>
    </source>
</evidence>
<evidence type="ECO:0000255" key="3">
    <source>
        <dbReference type="PROSITE-ProRule" id="PRU01231"/>
    </source>
</evidence>
<evidence type="ECO:0000256" key="4">
    <source>
        <dbReference type="SAM" id="MobiDB-lite"/>
    </source>
</evidence>
<accession>Q03JJ8</accession>
<reference key="1">
    <citation type="journal article" date="2006" name="Proc. Natl. Acad. Sci. U.S.A.">
        <title>Comparative genomics of the lactic acid bacteria.</title>
        <authorList>
            <person name="Makarova K.S."/>
            <person name="Slesarev A."/>
            <person name="Wolf Y.I."/>
            <person name="Sorokin A."/>
            <person name="Mirkin B."/>
            <person name="Koonin E.V."/>
            <person name="Pavlov A."/>
            <person name="Pavlova N."/>
            <person name="Karamychev V."/>
            <person name="Polouchine N."/>
            <person name="Shakhova V."/>
            <person name="Grigoriev I."/>
            <person name="Lou Y."/>
            <person name="Rohksar D."/>
            <person name="Lucas S."/>
            <person name="Huang K."/>
            <person name="Goodstein D.M."/>
            <person name="Hawkins T."/>
            <person name="Plengvidhya V."/>
            <person name="Welker D."/>
            <person name="Hughes J."/>
            <person name="Goh Y."/>
            <person name="Benson A."/>
            <person name="Baldwin K."/>
            <person name="Lee J.-H."/>
            <person name="Diaz-Muniz I."/>
            <person name="Dosti B."/>
            <person name="Smeianov V."/>
            <person name="Wechter W."/>
            <person name="Barabote R."/>
            <person name="Lorca G."/>
            <person name="Altermann E."/>
            <person name="Barrangou R."/>
            <person name="Ganesan B."/>
            <person name="Xie Y."/>
            <person name="Rawsthorne H."/>
            <person name="Tamir D."/>
            <person name="Parker C."/>
            <person name="Breidt F."/>
            <person name="Broadbent J.R."/>
            <person name="Hutkins R."/>
            <person name="O'Sullivan D."/>
            <person name="Steele J."/>
            <person name="Unlu G."/>
            <person name="Saier M.H. Jr."/>
            <person name="Klaenhammer T."/>
            <person name="Richardson P."/>
            <person name="Kozyavkin S."/>
            <person name="Weimer B.C."/>
            <person name="Mills D.A."/>
        </authorList>
    </citation>
    <scope>NUCLEOTIDE SEQUENCE [LARGE SCALE GENOMIC DNA]</scope>
    <source>
        <strain>ATCC BAA-491 / LMD-9</strain>
    </source>
</reference>
<keyword id="KW-0963">Cytoplasm</keyword>
<keyword id="KW-0342">GTP-binding</keyword>
<keyword id="KW-0378">Hydrolase</keyword>
<keyword id="KW-0460">Magnesium</keyword>
<keyword id="KW-0479">Metal-binding</keyword>
<keyword id="KW-0547">Nucleotide-binding</keyword>
<organism>
    <name type="scientific">Streptococcus thermophilus (strain ATCC BAA-491 / LMD-9)</name>
    <dbReference type="NCBI Taxonomy" id="322159"/>
    <lineage>
        <taxon>Bacteria</taxon>
        <taxon>Bacillati</taxon>
        <taxon>Bacillota</taxon>
        <taxon>Bacilli</taxon>
        <taxon>Lactobacillales</taxon>
        <taxon>Streptococcaceae</taxon>
        <taxon>Streptococcus</taxon>
    </lineage>
</organism>
<dbReference type="EC" id="3.6.5.-" evidence="1"/>
<dbReference type="EMBL" id="CP000419">
    <property type="protein sequence ID" value="ABJ66624.1"/>
    <property type="molecule type" value="Genomic_DNA"/>
</dbReference>
<dbReference type="SMR" id="Q03JJ8"/>
<dbReference type="KEGG" id="ste:STER_1464"/>
<dbReference type="HOGENOM" id="CLU_011747_2_1_9"/>
<dbReference type="GO" id="GO:0005737">
    <property type="term" value="C:cytoplasm"/>
    <property type="evidence" value="ECO:0007669"/>
    <property type="project" value="UniProtKB-SubCell"/>
</dbReference>
<dbReference type="GO" id="GO:0005525">
    <property type="term" value="F:GTP binding"/>
    <property type="evidence" value="ECO:0007669"/>
    <property type="project" value="UniProtKB-UniRule"/>
</dbReference>
<dbReference type="GO" id="GO:0003924">
    <property type="term" value="F:GTPase activity"/>
    <property type="evidence" value="ECO:0007669"/>
    <property type="project" value="UniProtKB-UniRule"/>
</dbReference>
<dbReference type="GO" id="GO:0000287">
    <property type="term" value="F:magnesium ion binding"/>
    <property type="evidence" value="ECO:0007669"/>
    <property type="project" value="InterPro"/>
</dbReference>
<dbReference type="GO" id="GO:0042254">
    <property type="term" value="P:ribosome biogenesis"/>
    <property type="evidence" value="ECO:0007669"/>
    <property type="project" value="UniProtKB-UniRule"/>
</dbReference>
<dbReference type="CDD" id="cd01898">
    <property type="entry name" value="Obg"/>
    <property type="match status" value="1"/>
</dbReference>
<dbReference type="FunFam" id="2.70.210.12:FF:000001">
    <property type="entry name" value="GTPase Obg"/>
    <property type="match status" value="1"/>
</dbReference>
<dbReference type="FunFam" id="3.40.50.300:FF:000515">
    <property type="entry name" value="GTPase Obg"/>
    <property type="match status" value="1"/>
</dbReference>
<dbReference type="Gene3D" id="3.30.300.350">
    <property type="entry name" value="GTP-binding protein OBG, C-terminal domain"/>
    <property type="match status" value="1"/>
</dbReference>
<dbReference type="Gene3D" id="2.70.210.12">
    <property type="entry name" value="GTP1/OBG domain"/>
    <property type="match status" value="1"/>
</dbReference>
<dbReference type="Gene3D" id="3.40.50.300">
    <property type="entry name" value="P-loop containing nucleotide triphosphate hydrolases"/>
    <property type="match status" value="1"/>
</dbReference>
<dbReference type="HAMAP" id="MF_01454">
    <property type="entry name" value="GTPase_Obg"/>
    <property type="match status" value="1"/>
</dbReference>
<dbReference type="InterPro" id="IPR031167">
    <property type="entry name" value="G_OBG"/>
</dbReference>
<dbReference type="InterPro" id="IPR006073">
    <property type="entry name" value="GTP-bd"/>
</dbReference>
<dbReference type="InterPro" id="IPR014100">
    <property type="entry name" value="GTP-bd_Obg/CgtA"/>
</dbReference>
<dbReference type="InterPro" id="IPR036346">
    <property type="entry name" value="GTP-bd_prot_GTP1/OBG_C_sf"/>
</dbReference>
<dbReference type="InterPro" id="IPR006074">
    <property type="entry name" value="GTP1-OBG_CS"/>
</dbReference>
<dbReference type="InterPro" id="IPR006169">
    <property type="entry name" value="GTP1_OBG_dom"/>
</dbReference>
<dbReference type="InterPro" id="IPR036726">
    <property type="entry name" value="GTP1_OBG_dom_sf"/>
</dbReference>
<dbReference type="InterPro" id="IPR045086">
    <property type="entry name" value="OBG_GTPase"/>
</dbReference>
<dbReference type="InterPro" id="IPR015349">
    <property type="entry name" value="OCT_dom"/>
</dbReference>
<dbReference type="InterPro" id="IPR027417">
    <property type="entry name" value="P-loop_NTPase"/>
</dbReference>
<dbReference type="InterPro" id="IPR005225">
    <property type="entry name" value="Small_GTP-bd"/>
</dbReference>
<dbReference type="NCBIfam" id="TIGR02729">
    <property type="entry name" value="Obg_CgtA"/>
    <property type="match status" value="1"/>
</dbReference>
<dbReference type="NCBIfam" id="TIGR03595">
    <property type="entry name" value="Obg_CgtA_exten"/>
    <property type="match status" value="1"/>
</dbReference>
<dbReference type="NCBIfam" id="NF008954">
    <property type="entry name" value="PRK12296.1"/>
    <property type="match status" value="1"/>
</dbReference>
<dbReference type="NCBIfam" id="NF008955">
    <property type="entry name" value="PRK12297.1"/>
    <property type="match status" value="1"/>
</dbReference>
<dbReference type="NCBIfam" id="NF008956">
    <property type="entry name" value="PRK12299.1"/>
    <property type="match status" value="1"/>
</dbReference>
<dbReference type="NCBIfam" id="TIGR00231">
    <property type="entry name" value="small_GTP"/>
    <property type="match status" value="1"/>
</dbReference>
<dbReference type="PANTHER" id="PTHR11702">
    <property type="entry name" value="DEVELOPMENTALLY REGULATED GTP-BINDING PROTEIN-RELATED"/>
    <property type="match status" value="1"/>
</dbReference>
<dbReference type="PANTHER" id="PTHR11702:SF31">
    <property type="entry name" value="MITOCHONDRIAL RIBOSOME-ASSOCIATED GTPASE 2"/>
    <property type="match status" value="1"/>
</dbReference>
<dbReference type="Pfam" id="PF09269">
    <property type="entry name" value="DUF1967"/>
    <property type="match status" value="1"/>
</dbReference>
<dbReference type="Pfam" id="PF01018">
    <property type="entry name" value="GTP1_OBG"/>
    <property type="match status" value="1"/>
</dbReference>
<dbReference type="Pfam" id="PF01926">
    <property type="entry name" value="MMR_HSR1"/>
    <property type="match status" value="1"/>
</dbReference>
<dbReference type="PIRSF" id="PIRSF002401">
    <property type="entry name" value="GTP_bd_Obg/CgtA"/>
    <property type="match status" value="1"/>
</dbReference>
<dbReference type="PRINTS" id="PR00326">
    <property type="entry name" value="GTP1OBG"/>
</dbReference>
<dbReference type="SUPFAM" id="SSF102741">
    <property type="entry name" value="Obg GTP-binding protein C-terminal domain"/>
    <property type="match status" value="1"/>
</dbReference>
<dbReference type="SUPFAM" id="SSF82051">
    <property type="entry name" value="Obg GTP-binding protein N-terminal domain"/>
    <property type="match status" value="1"/>
</dbReference>
<dbReference type="SUPFAM" id="SSF52540">
    <property type="entry name" value="P-loop containing nucleoside triphosphate hydrolases"/>
    <property type="match status" value="1"/>
</dbReference>
<dbReference type="PROSITE" id="PS51710">
    <property type="entry name" value="G_OBG"/>
    <property type="match status" value="1"/>
</dbReference>
<dbReference type="PROSITE" id="PS00905">
    <property type="entry name" value="GTP1_OBG"/>
    <property type="match status" value="1"/>
</dbReference>
<dbReference type="PROSITE" id="PS51883">
    <property type="entry name" value="OBG"/>
    <property type="match status" value="1"/>
</dbReference>
<dbReference type="PROSITE" id="PS51881">
    <property type="entry name" value="OCT"/>
    <property type="match status" value="1"/>
</dbReference>
<name>OBG_STRTD</name>